<organism>
    <name type="scientific">Rhodopseudomonas palustris (strain BisB18)</name>
    <dbReference type="NCBI Taxonomy" id="316056"/>
    <lineage>
        <taxon>Bacteria</taxon>
        <taxon>Pseudomonadati</taxon>
        <taxon>Pseudomonadota</taxon>
        <taxon>Alphaproteobacteria</taxon>
        <taxon>Hyphomicrobiales</taxon>
        <taxon>Nitrobacteraceae</taxon>
        <taxon>Rhodopseudomonas</taxon>
    </lineage>
</organism>
<gene>
    <name evidence="1" type="primary">gatA</name>
    <name type="ordered locus">RPC_2264</name>
</gene>
<dbReference type="EC" id="6.3.5.7" evidence="1"/>
<dbReference type="EMBL" id="CP000301">
    <property type="protein sequence ID" value="ABD87818.1"/>
    <property type="molecule type" value="Genomic_DNA"/>
</dbReference>
<dbReference type="SMR" id="Q215W8"/>
<dbReference type="STRING" id="316056.RPC_2264"/>
<dbReference type="KEGG" id="rpc:RPC_2264"/>
<dbReference type="eggNOG" id="COG0154">
    <property type="taxonomic scope" value="Bacteria"/>
</dbReference>
<dbReference type="HOGENOM" id="CLU_009600_0_3_5"/>
<dbReference type="OrthoDB" id="9811471at2"/>
<dbReference type="GO" id="GO:0030956">
    <property type="term" value="C:glutamyl-tRNA(Gln) amidotransferase complex"/>
    <property type="evidence" value="ECO:0007669"/>
    <property type="project" value="InterPro"/>
</dbReference>
<dbReference type="GO" id="GO:0005524">
    <property type="term" value="F:ATP binding"/>
    <property type="evidence" value="ECO:0007669"/>
    <property type="project" value="UniProtKB-KW"/>
</dbReference>
<dbReference type="GO" id="GO:0050567">
    <property type="term" value="F:glutaminyl-tRNA synthase (glutamine-hydrolyzing) activity"/>
    <property type="evidence" value="ECO:0007669"/>
    <property type="project" value="UniProtKB-UniRule"/>
</dbReference>
<dbReference type="GO" id="GO:0006412">
    <property type="term" value="P:translation"/>
    <property type="evidence" value="ECO:0007669"/>
    <property type="project" value="UniProtKB-UniRule"/>
</dbReference>
<dbReference type="Gene3D" id="3.90.1300.10">
    <property type="entry name" value="Amidase signature (AS) domain"/>
    <property type="match status" value="1"/>
</dbReference>
<dbReference type="HAMAP" id="MF_00120">
    <property type="entry name" value="GatA"/>
    <property type="match status" value="1"/>
</dbReference>
<dbReference type="InterPro" id="IPR000120">
    <property type="entry name" value="Amidase"/>
</dbReference>
<dbReference type="InterPro" id="IPR020556">
    <property type="entry name" value="Amidase_CS"/>
</dbReference>
<dbReference type="InterPro" id="IPR023631">
    <property type="entry name" value="Amidase_dom"/>
</dbReference>
<dbReference type="InterPro" id="IPR036928">
    <property type="entry name" value="AS_sf"/>
</dbReference>
<dbReference type="InterPro" id="IPR004412">
    <property type="entry name" value="GatA"/>
</dbReference>
<dbReference type="NCBIfam" id="TIGR00132">
    <property type="entry name" value="gatA"/>
    <property type="match status" value="1"/>
</dbReference>
<dbReference type="PANTHER" id="PTHR11895:SF151">
    <property type="entry name" value="GLUTAMYL-TRNA(GLN) AMIDOTRANSFERASE SUBUNIT A"/>
    <property type="match status" value="1"/>
</dbReference>
<dbReference type="PANTHER" id="PTHR11895">
    <property type="entry name" value="TRANSAMIDASE"/>
    <property type="match status" value="1"/>
</dbReference>
<dbReference type="Pfam" id="PF01425">
    <property type="entry name" value="Amidase"/>
    <property type="match status" value="1"/>
</dbReference>
<dbReference type="SUPFAM" id="SSF75304">
    <property type="entry name" value="Amidase signature (AS) enzymes"/>
    <property type="match status" value="1"/>
</dbReference>
<dbReference type="PROSITE" id="PS00571">
    <property type="entry name" value="AMIDASES"/>
    <property type="match status" value="1"/>
</dbReference>
<comment type="function">
    <text evidence="1">Allows the formation of correctly charged Gln-tRNA(Gln) through the transamidation of misacylated Glu-tRNA(Gln) in organisms which lack glutaminyl-tRNA synthetase. The reaction takes place in the presence of glutamine and ATP through an activated gamma-phospho-Glu-tRNA(Gln).</text>
</comment>
<comment type="catalytic activity">
    <reaction evidence="1">
        <text>L-glutamyl-tRNA(Gln) + L-glutamine + ATP + H2O = L-glutaminyl-tRNA(Gln) + L-glutamate + ADP + phosphate + H(+)</text>
        <dbReference type="Rhea" id="RHEA:17521"/>
        <dbReference type="Rhea" id="RHEA-COMP:9681"/>
        <dbReference type="Rhea" id="RHEA-COMP:9684"/>
        <dbReference type="ChEBI" id="CHEBI:15377"/>
        <dbReference type="ChEBI" id="CHEBI:15378"/>
        <dbReference type="ChEBI" id="CHEBI:29985"/>
        <dbReference type="ChEBI" id="CHEBI:30616"/>
        <dbReference type="ChEBI" id="CHEBI:43474"/>
        <dbReference type="ChEBI" id="CHEBI:58359"/>
        <dbReference type="ChEBI" id="CHEBI:78520"/>
        <dbReference type="ChEBI" id="CHEBI:78521"/>
        <dbReference type="ChEBI" id="CHEBI:456216"/>
        <dbReference type="EC" id="6.3.5.7"/>
    </reaction>
</comment>
<comment type="subunit">
    <text evidence="1">Heterotrimer of A, B and C subunits.</text>
</comment>
<comment type="similarity">
    <text evidence="1">Belongs to the amidase family. GatA subfamily.</text>
</comment>
<proteinExistence type="inferred from homology"/>
<evidence type="ECO:0000255" key="1">
    <source>
        <dbReference type="HAMAP-Rule" id="MF_00120"/>
    </source>
</evidence>
<feature type="chain" id="PRO_0000241145" description="Glutamyl-tRNA(Gln) amidotransferase subunit A">
    <location>
        <begin position="1"/>
        <end position="492"/>
    </location>
</feature>
<feature type="active site" description="Charge relay system" evidence="1">
    <location>
        <position position="78"/>
    </location>
</feature>
<feature type="active site" description="Charge relay system" evidence="1">
    <location>
        <position position="158"/>
    </location>
</feature>
<feature type="active site" description="Acyl-ester intermediate" evidence="1">
    <location>
        <position position="182"/>
    </location>
</feature>
<keyword id="KW-0067">ATP-binding</keyword>
<keyword id="KW-0436">Ligase</keyword>
<keyword id="KW-0547">Nucleotide-binding</keyword>
<keyword id="KW-0648">Protein biosynthesis</keyword>
<name>GATA_RHOPB</name>
<protein>
    <recommendedName>
        <fullName evidence="1">Glutamyl-tRNA(Gln) amidotransferase subunit A</fullName>
        <shortName evidence="1">Glu-ADT subunit A</shortName>
        <ecNumber evidence="1">6.3.5.7</ecNumber>
    </recommendedName>
</protein>
<accession>Q215W8</accession>
<reference key="1">
    <citation type="submission" date="2006-03" db="EMBL/GenBank/DDBJ databases">
        <title>Complete sequence of Rhodopseudomonas palustris BisB18.</title>
        <authorList>
            <consortium name="US DOE Joint Genome Institute"/>
            <person name="Copeland A."/>
            <person name="Lucas S."/>
            <person name="Lapidus A."/>
            <person name="Barry K."/>
            <person name="Detter J.C."/>
            <person name="Glavina del Rio T."/>
            <person name="Hammon N."/>
            <person name="Israni S."/>
            <person name="Dalin E."/>
            <person name="Tice H."/>
            <person name="Pitluck S."/>
            <person name="Chain P."/>
            <person name="Malfatti S."/>
            <person name="Shin M."/>
            <person name="Vergez L."/>
            <person name="Schmutz J."/>
            <person name="Larimer F."/>
            <person name="Land M."/>
            <person name="Hauser L."/>
            <person name="Pelletier D.A."/>
            <person name="Kyrpides N."/>
            <person name="Anderson I."/>
            <person name="Oda Y."/>
            <person name="Harwood C.S."/>
            <person name="Richardson P."/>
        </authorList>
    </citation>
    <scope>NUCLEOTIDE SEQUENCE [LARGE SCALE GENOMIC DNA]</scope>
    <source>
        <strain>BisB18</strain>
    </source>
</reference>
<sequence length="492" mass="52024">MTDLTSLTLAEARDGLAAKSFSSLQLTDAHLAAIEAARVLNAFVLETPDQARSMAKAADAKIAKGEGGPLEGLPLGIKDLFATSGVRTTACSKILDDFTPPYESTVTSQLWRDGAVLLGKLNNDEFAMGSSNETSCFGPVVNPWRREGSDAKLVPGGSSGGSASAVAAGLCLGATATDTGGSIRQPAAFTGTVGIKPTYGRCSRWGIVAFASSLDQAGPIARTVRDSAILLRSMAGYDAKDTTSVDRAVPDYEAAVGRSVKGMKIGIPKEYRIGGMPAEIEALWKQGADWLKAAGAELVEVSLPHTKYALPAYYIVAPAEASSNLARYDGVRYGARVNGRNITEMYENTRAQGFGAEVIRRIMIGTYVLSAGYYDAYYLRAQKVRTLIKRDFEECFAKGVSAILTPATPSAAFGIGEKGGADPVEMYLNDIFTVTVNMAGLPGIAVPAGRDSQGLPLGLQLIGRPFDEETLFSLGEVIEQAAGRFTAAKWWI</sequence>